<keyword id="KW-0963">Cytoplasm</keyword>
<keyword id="KW-0238">DNA-binding</keyword>
<dbReference type="EMBL" id="BX640426">
    <property type="protein sequence ID" value="CAE36524.1"/>
    <property type="molecule type" value="Genomic_DNA"/>
</dbReference>
<dbReference type="RefSeq" id="WP_003809572.1">
    <property type="nucleotide sequence ID" value="NC_002928.3"/>
</dbReference>
<dbReference type="SMR" id="Q7WAY8"/>
<dbReference type="KEGG" id="bpa:BPP1222"/>
<dbReference type="HOGENOM" id="CLU_140930_0_0_4"/>
<dbReference type="Proteomes" id="UP000001421">
    <property type="component" value="Chromosome"/>
</dbReference>
<dbReference type="GO" id="GO:0043590">
    <property type="term" value="C:bacterial nucleoid"/>
    <property type="evidence" value="ECO:0007669"/>
    <property type="project" value="UniProtKB-UniRule"/>
</dbReference>
<dbReference type="GO" id="GO:0005829">
    <property type="term" value="C:cytosol"/>
    <property type="evidence" value="ECO:0007669"/>
    <property type="project" value="TreeGrafter"/>
</dbReference>
<dbReference type="GO" id="GO:0003677">
    <property type="term" value="F:DNA binding"/>
    <property type="evidence" value="ECO:0007669"/>
    <property type="project" value="UniProtKB-UniRule"/>
</dbReference>
<dbReference type="FunFam" id="3.30.1310.10:FF:000001">
    <property type="entry name" value="Nucleoid-associated protein YbaB"/>
    <property type="match status" value="1"/>
</dbReference>
<dbReference type="Gene3D" id="3.30.1310.10">
    <property type="entry name" value="Nucleoid-associated protein YbaB-like domain"/>
    <property type="match status" value="1"/>
</dbReference>
<dbReference type="HAMAP" id="MF_00274">
    <property type="entry name" value="DNA_YbaB_EbfC"/>
    <property type="match status" value="1"/>
</dbReference>
<dbReference type="InterPro" id="IPR036894">
    <property type="entry name" value="YbaB-like_sf"/>
</dbReference>
<dbReference type="InterPro" id="IPR004401">
    <property type="entry name" value="YbaB/EbfC"/>
</dbReference>
<dbReference type="NCBIfam" id="TIGR00103">
    <property type="entry name" value="DNA_YbaB_EbfC"/>
    <property type="match status" value="1"/>
</dbReference>
<dbReference type="PANTHER" id="PTHR33449">
    <property type="entry name" value="NUCLEOID-ASSOCIATED PROTEIN YBAB"/>
    <property type="match status" value="1"/>
</dbReference>
<dbReference type="PANTHER" id="PTHR33449:SF1">
    <property type="entry name" value="NUCLEOID-ASSOCIATED PROTEIN YBAB"/>
    <property type="match status" value="1"/>
</dbReference>
<dbReference type="Pfam" id="PF02575">
    <property type="entry name" value="YbaB_DNA_bd"/>
    <property type="match status" value="1"/>
</dbReference>
<dbReference type="PIRSF" id="PIRSF004555">
    <property type="entry name" value="UCP004555"/>
    <property type="match status" value="1"/>
</dbReference>
<dbReference type="SUPFAM" id="SSF82607">
    <property type="entry name" value="YbaB-like"/>
    <property type="match status" value="1"/>
</dbReference>
<reference key="1">
    <citation type="journal article" date="2003" name="Nat. Genet.">
        <title>Comparative analysis of the genome sequences of Bordetella pertussis, Bordetella parapertussis and Bordetella bronchiseptica.</title>
        <authorList>
            <person name="Parkhill J."/>
            <person name="Sebaihia M."/>
            <person name="Preston A."/>
            <person name="Murphy L.D."/>
            <person name="Thomson N.R."/>
            <person name="Harris D.E."/>
            <person name="Holden M.T.G."/>
            <person name="Churcher C.M."/>
            <person name="Bentley S.D."/>
            <person name="Mungall K.L."/>
            <person name="Cerdeno-Tarraga A.-M."/>
            <person name="Temple L."/>
            <person name="James K.D."/>
            <person name="Harris B."/>
            <person name="Quail M.A."/>
            <person name="Achtman M."/>
            <person name="Atkin R."/>
            <person name="Baker S."/>
            <person name="Basham D."/>
            <person name="Bason N."/>
            <person name="Cherevach I."/>
            <person name="Chillingworth T."/>
            <person name="Collins M."/>
            <person name="Cronin A."/>
            <person name="Davis P."/>
            <person name="Doggett J."/>
            <person name="Feltwell T."/>
            <person name="Goble A."/>
            <person name="Hamlin N."/>
            <person name="Hauser H."/>
            <person name="Holroyd S."/>
            <person name="Jagels K."/>
            <person name="Leather S."/>
            <person name="Moule S."/>
            <person name="Norberczak H."/>
            <person name="O'Neil S."/>
            <person name="Ormond D."/>
            <person name="Price C."/>
            <person name="Rabbinowitsch E."/>
            <person name="Rutter S."/>
            <person name="Sanders M."/>
            <person name="Saunders D."/>
            <person name="Seeger K."/>
            <person name="Sharp S."/>
            <person name="Simmonds M."/>
            <person name="Skelton J."/>
            <person name="Squares R."/>
            <person name="Squares S."/>
            <person name="Stevens K."/>
            <person name="Unwin L."/>
            <person name="Whitehead S."/>
            <person name="Barrell B.G."/>
            <person name="Maskell D.J."/>
        </authorList>
    </citation>
    <scope>NUCLEOTIDE SEQUENCE [LARGE SCALE GENOMIC DNA]</scope>
    <source>
        <strain>12822 / ATCC BAA-587 / NCTC 13253</strain>
    </source>
</reference>
<accession>Q7WAY8</accession>
<gene>
    <name type="ordered locus">BPP1222</name>
</gene>
<organism>
    <name type="scientific">Bordetella parapertussis (strain 12822 / ATCC BAA-587 / NCTC 13253)</name>
    <dbReference type="NCBI Taxonomy" id="257311"/>
    <lineage>
        <taxon>Bacteria</taxon>
        <taxon>Pseudomonadati</taxon>
        <taxon>Pseudomonadota</taxon>
        <taxon>Betaproteobacteria</taxon>
        <taxon>Burkholderiales</taxon>
        <taxon>Alcaligenaceae</taxon>
        <taxon>Bordetella</taxon>
    </lineage>
</organism>
<sequence length="108" mass="11573">MMKGQLAGLMRQAQQMQENMKKAQDALAEIQVEGAAGGGLVKVTMTCRHDVKRVAIDPSLLGEDKDMLEDLVAAAFNDALRKAEATSQEKMASVTAGMPLPPGMKLPF</sequence>
<evidence type="ECO:0000255" key="1">
    <source>
        <dbReference type="HAMAP-Rule" id="MF_00274"/>
    </source>
</evidence>
<evidence type="ECO:0000256" key="2">
    <source>
        <dbReference type="SAM" id="MobiDB-lite"/>
    </source>
</evidence>
<name>Y1222_BORPA</name>
<feature type="chain" id="PRO_0000170368" description="Nucleoid-associated protein BPP1222">
    <location>
        <begin position="1"/>
        <end position="108"/>
    </location>
</feature>
<feature type="region of interest" description="Disordered" evidence="2">
    <location>
        <begin position="86"/>
        <end position="108"/>
    </location>
</feature>
<feature type="compositionally biased region" description="Pro residues" evidence="2">
    <location>
        <begin position="99"/>
        <end position="108"/>
    </location>
</feature>
<comment type="function">
    <text evidence="1">Binds to DNA and alters its conformation. May be involved in regulation of gene expression, nucleoid organization and DNA protection.</text>
</comment>
<comment type="subunit">
    <text evidence="1">Homodimer.</text>
</comment>
<comment type="subcellular location">
    <subcellularLocation>
        <location evidence="1">Cytoplasm</location>
        <location evidence="1">Nucleoid</location>
    </subcellularLocation>
</comment>
<comment type="similarity">
    <text evidence="1">Belongs to the YbaB/EbfC family.</text>
</comment>
<protein>
    <recommendedName>
        <fullName evidence="1">Nucleoid-associated protein BPP1222</fullName>
    </recommendedName>
</protein>
<proteinExistence type="inferred from homology"/>